<accession>Q5HR69</accession>
<sequence>MITKEDIVADVVTDYPKSADIFRNAGIDFCCGGQESIASAVNHKPNIDLNSLLNKLNHIDNTEGNSTINPKFLNVESLIQYIQSAYHETLKEEFKNLTPYMTKLAKVHGPSHPYLLKLQDLYREFRDSMLDHIRKEDEEDFPKLIQYSQGQDVQNIKIILEDLINDHEDTGQLLNVMNQLTSDYQTPEEACGTWKLVYQRLQNIERQTHQHVHLENHVLFKKVS</sequence>
<protein>
    <recommendedName>
        <fullName evidence="1">Iron-sulfur cluster repair protein ScdA</fullName>
    </recommendedName>
</protein>
<comment type="function">
    <text evidence="1">Di-iron-containing protein involved in the repair of iron-sulfur clusters damaged by oxidative and nitrosative stress conditions.</text>
</comment>
<comment type="subunit">
    <text evidence="1">Homodimer.</text>
</comment>
<comment type="subcellular location">
    <subcellularLocation>
        <location evidence="1">Cytoplasm</location>
    </subcellularLocation>
</comment>
<comment type="similarity">
    <text evidence="1">Belongs to the RIC family. ScdA subfamily.</text>
</comment>
<gene>
    <name evidence="1" type="primary">scdA</name>
    <name type="ordered locus">SERP0324</name>
</gene>
<dbReference type="EMBL" id="CP000029">
    <property type="protein sequence ID" value="AAW53686.1"/>
    <property type="molecule type" value="Genomic_DNA"/>
</dbReference>
<dbReference type="RefSeq" id="WP_001832101.1">
    <property type="nucleotide sequence ID" value="NC_002976.3"/>
</dbReference>
<dbReference type="SMR" id="Q5HR69"/>
<dbReference type="STRING" id="176279.SERP0324"/>
<dbReference type="GeneID" id="50019405"/>
<dbReference type="KEGG" id="ser:SERP0324"/>
<dbReference type="eggNOG" id="COG2846">
    <property type="taxonomic scope" value="Bacteria"/>
</dbReference>
<dbReference type="HOGENOM" id="CLU_076075_0_1_9"/>
<dbReference type="Proteomes" id="UP000000531">
    <property type="component" value="Chromosome"/>
</dbReference>
<dbReference type="GO" id="GO:0005737">
    <property type="term" value="C:cytoplasm"/>
    <property type="evidence" value="ECO:0007669"/>
    <property type="project" value="UniProtKB-SubCell"/>
</dbReference>
<dbReference type="GO" id="GO:0046872">
    <property type="term" value="F:metal ion binding"/>
    <property type="evidence" value="ECO:0007669"/>
    <property type="project" value="UniProtKB-KW"/>
</dbReference>
<dbReference type="GO" id="GO:0030091">
    <property type="term" value="P:protein repair"/>
    <property type="evidence" value="ECO:0007669"/>
    <property type="project" value="UniProtKB-UniRule"/>
</dbReference>
<dbReference type="GO" id="GO:0051409">
    <property type="term" value="P:response to nitrosative stress"/>
    <property type="evidence" value="ECO:0007669"/>
    <property type="project" value="UniProtKB-UniRule"/>
</dbReference>
<dbReference type="GO" id="GO:0006979">
    <property type="term" value="P:response to oxidative stress"/>
    <property type="evidence" value="ECO:0007669"/>
    <property type="project" value="UniProtKB-UniRule"/>
</dbReference>
<dbReference type="Gene3D" id="1.20.120.520">
    <property type="entry name" value="nmb1532 protein domain like"/>
    <property type="match status" value="1"/>
</dbReference>
<dbReference type="Gene3D" id="1.10.3910.10">
    <property type="entry name" value="SP0561-like"/>
    <property type="match status" value="1"/>
</dbReference>
<dbReference type="HAMAP" id="MF_01156">
    <property type="entry name" value="RIC_ScdA"/>
    <property type="match status" value="1"/>
</dbReference>
<dbReference type="InterPro" id="IPR012312">
    <property type="entry name" value="Hemerythrin-like"/>
</dbReference>
<dbReference type="InterPro" id="IPR019903">
    <property type="entry name" value="RIC_family"/>
</dbReference>
<dbReference type="InterPro" id="IPR023551">
    <property type="entry name" value="ScdA"/>
</dbReference>
<dbReference type="InterPro" id="IPR038062">
    <property type="entry name" value="ScdA-like_N_sf"/>
</dbReference>
<dbReference type="NCBIfam" id="TIGR03652">
    <property type="entry name" value="FeS_repair_RIC"/>
    <property type="match status" value="1"/>
</dbReference>
<dbReference type="NCBIfam" id="NF009777">
    <property type="entry name" value="PRK13276.1"/>
    <property type="match status" value="1"/>
</dbReference>
<dbReference type="PANTHER" id="PTHR36438">
    <property type="entry name" value="IRON-SULFUR CLUSTER REPAIR PROTEIN YTFE"/>
    <property type="match status" value="1"/>
</dbReference>
<dbReference type="PANTHER" id="PTHR36438:SF1">
    <property type="entry name" value="IRON-SULFUR CLUSTER REPAIR PROTEIN YTFE"/>
    <property type="match status" value="1"/>
</dbReference>
<dbReference type="Pfam" id="PF01814">
    <property type="entry name" value="Hemerythrin"/>
    <property type="match status" value="1"/>
</dbReference>
<dbReference type="Pfam" id="PF04405">
    <property type="entry name" value="ScdA_N"/>
    <property type="match status" value="1"/>
</dbReference>
<dbReference type="SUPFAM" id="SSF140683">
    <property type="entry name" value="SP0561-like"/>
    <property type="match status" value="1"/>
</dbReference>
<evidence type="ECO:0000255" key="1">
    <source>
        <dbReference type="HAMAP-Rule" id="MF_01156"/>
    </source>
</evidence>
<name>SCDA_STAEQ</name>
<reference key="1">
    <citation type="journal article" date="2005" name="J. Bacteriol.">
        <title>Insights on evolution of virulence and resistance from the complete genome analysis of an early methicillin-resistant Staphylococcus aureus strain and a biofilm-producing methicillin-resistant Staphylococcus epidermidis strain.</title>
        <authorList>
            <person name="Gill S.R."/>
            <person name="Fouts D.E."/>
            <person name="Archer G.L."/>
            <person name="Mongodin E.F."/>
            <person name="DeBoy R.T."/>
            <person name="Ravel J."/>
            <person name="Paulsen I.T."/>
            <person name="Kolonay J.F."/>
            <person name="Brinkac L.M."/>
            <person name="Beanan M.J."/>
            <person name="Dodson R.J."/>
            <person name="Daugherty S.C."/>
            <person name="Madupu R."/>
            <person name="Angiuoli S.V."/>
            <person name="Durkin A.S."/>
            <person name="Haft D.H."/>
            <person name="Vamathevan J.J."/>
            <person name="Khouri H."/>
            <person name="Utterback T.R."/>
            <person name="Lee C."/>
            <person name="Dimitrov G."/>
            <person name="Jiang L."/>
            <person name="Qin H."/>
            <person name="Weidman J."/>
            <person name="Tran K."/>
            <person name="Kang K.H."/>
            <person name="Hance I.R."/>
            <person name="Nelson K.E."/>
            <person name="Fraser C.M."/>
        </authorList>
    </citation>
    <scope>NUCLEOTIDE SEQUENCE [LARGE SCALE GENOMIC DNA]</scope>
    <source>
        <strain>ATCC 35984 / DSM 28319 / BCRC 17069 / CCUG 31568 / BM 3577 / RP62A</strain>
    </source>
</reference>
<proteinExistence type="inferred from homology"/>
<organism>
    <name type="scientific">Staphylococcus epidermidis (strain ATCC 35984 / DSM 28319 / BCRC 17069 / CCUG 31568 / BM 3577 / RP62A)</name>
    <dbReference type="NCBI Taxonomy" id="176279"/>
    <lineage>
        <taxon>Bacteria</taxon>
        <taxon>Bacillati</taxon>
        <taxon>Bacillota</taxon>
        <taxon>Bacilli</taxon>
        <taxon>Bacillales</taxon>
        <taxon>Staphylococcaceae</taxon>
        <taxon>Staphylococcus</taxon>
    </lineage>
</organism>
<feature type="chain" id="PRO_0000220343" description="Iron-sulfur cluster repair protein ScdA">
    <location>
        <begin position="1"/>
        <end position="224"/>
    </location>
</feature>
<keyword id="KW-0963">Cytoplasm</keyword>
<keyword id="KW-0408">Iron</keyword>
<keyword id="KW-0479">Metal-binding</keyword>
<keyword id="KW-1185">Reference proteome</keyword>
<keyword id="KW-0346">Stress response</keyword>